<proteinExistence type="inferred from homology"/>
<gene>
    <name evidence="1" type="primary">PAC1</name>
    <name evidence="1" type="synonym">LIS1</name>
    <name type="ORF">FGRRES_05038</name>
    <name type="ORF">FGSG_05038</name>
</gene>
<protein>
    <recommendedName>
        <fullName evidence="1">Nuclear distribution protein PAC1</fullName>
    </recommendedName>
    <alternativeName>
        <fullName evidence="1">Lissencephaly-1 homolog</fullName>
        <shortName evidence="1">LIS-1</shortName>
    </alternativeName>
    <alternativeName>
        <fullName evidence="1">nudF homolog</fullName>
    </alternativeName>
</protein>
<reference key="1">
    <citation type="journal article" date="2007" name="Science">
        <title>The Fusarium graminearum genome reveals a link between localized polymorphism and pathogen specialization.</title>
        <authorList>
            <person name="Cuomo C.A."/>
            <person name="Gueldener U."/>
            <person name="Xu J.-R."/>
            <person name="Trail F."/>
            <person name="Turgeon B.G."/>
            <person name="Di Pietro A."/>
            <person name="Walton J.D."/>
            <person name="Ma L.-J."/>
            <person name="Baker S.E."/>
            <person name="Rep M."/>
            <person name="Adam G."/>
            <person name="Antoniw J."/>
            <person name="Baldwin T."/>
            <person name="Calvo S.E."/>
            <person name="Chang Y.-L."/>
            <person name="DeCaprio D."/>
            <person name="Gale L.R."/>
            <person name="Gnerre S."/>
            <person name="Goswami R.S."/>
            <person name="Hammond-Kosack K."/>
            <person name="Harris L.J."/>
            <person name="Hilburn K."/>
            <person name="Kennell J.C."/>
            <person name="Kroken S."/>
            <person name="Magnuson J.K."/>
            <person name="Mannhaupt G."/>
            <person name="Mauceli E.W."/>
            <person name="Mewes H.-W."/>
            <person name="Mitterbauer R."/>
            <person name="Muehlbauer G."/>
            <person name="Muensterkoetter M."/>
            <person name="Nelson D."/>
            <person name="O'Donnell K."/>
            <person name="Ouellet T."/>
            <person name="Qi W."/>
            <person name="Quesneville H."/>
            <person name="Roncero M.I.G."/>
            <person name="Seong K.-Y."/>
            <person name="Tetko I.V."/>
            <person name="Urban M."/>
            <person name="Waalwijk C."/>
            <person name="Ward T.J."/>
            <person name="Yao J."/>
            <person name="Birren B.W."/>
            <person name="Kistler H.C."/>
        </authorList>
    </citation>
    <scope>NUCLEOTIDE SEQUENCE [LARGE SCALE GENOMIC DNA]</scope>
    <source>
        <strain>ATCC MYA-4620 / CBS 123657 / FGSC 9075 / NRRL 31084 / PH-1</strain>
    </source>
</reference>
<reference key="2">
    <citation type="journal article" date="2010" name="Nature">
        <title>Comparative genomics reveals mobile pathogenicity chromosomes in Fusarium.</title>
        <authorList>
            <person name="Ma L.-J."/>
            <person name="van der Does H.C."/>
            <person name="Borkovich K.A."/>
            <person name="Coleman J.J."/>
            <person name="Daboussi M.-J."/>
            <person name="Di Pietro A."/>
            <person name="Dufresne M."/>
            <person name="Freitag M."/>
            <person name="Grabherr M."/>
            <person name="Henrissat B."/>
            <person name="Houterman P.M."/>
            <person name="Kang S."/>
            <person name="Shim W.-B."/>
            <person name="Woloshuk C."/>
            <person name="Xie X."/>
            <person name="Xu J.-R."/>
            <person name="Antoniw J."/>
            <person name="Baker S.E."/>
            <person name="Bluhm B.H."/>
            <person name="Breakspear A."/>
            <person name="Brown D.W."/>
            <person name="Butchko R.A.E."/>
            <person name="Chapman S."/>
            <person name="Coulson R."/>
            <person name="Coutinho P.M."/>
            <person name="Danchin E.G.J."/>
            <person name="Diener A."/>
            <person name="Gale L.R."/>
            <person name="Gardiner D.M."/>
            <person name="Goff S."/>
            <person name="Hammond-Kosack K.E."/>
            <person name="Hilburn K."/>
            <person name="Hua-Van A."/>
            <person name="Jonkers W."/>
            <person name="Kazan K."/>
            <person name="Kodira C.D."/>
            <person name="Koehrsen M."/>
            <person name="Kumar L."/>
            <person name="Lee Y.-H."/>
            <person name="Li L."/>
            <person name="Manners J.M."/>
            <person name="Miranda-Saavedra D."/>
            <person name="Mukherjee M."/>
            <person name="Park G."/>
            <person name="Park J."/>
            <person name="Park S.-Y."/>
            <person name="Proctor R.H."/>
            <person name="Regev A."/>
            <person name="Ruiz-Roldan M.C."/>
            <person name="Sain D."/>
            <person name="Sakthikumar S."/>
            <person name="Sykes S."/>
            <person name="Schwartz D.C."/>
            <person name="Turgeon B.G."/>
            <person name="Wapinski I."/>
            <person name="Yoder O."/>
            <person name="Young S."/>
            <person name="Zeng Q."/>
            <person name="Zhou S."/>
            <person name="Galagan J."/>
            <person name="Cuomo C.A."/>
            <person name="Kistler H.C."/>
            <person name="Rep M."/>
        </authorList>
    </citation>
    <scope>GENOME REANNOTATION</scope>
    <source>
        <strain>ATCC MYA-4620 / CBS 123657 / FGSC 9075 / NRRL 31084 / PH-1</strain>
    </source>
</reference>
<reference key="3">
    <citation type="journal article" date="2015" name="BMC Genomics">
        <title>The completed genome sequence of the pathogenic ascomycete fungus Fusarium graminearum.</title>
        <authorList>
            <person name="King R."/>
            <person name="Urban M."/>
            <person name="Hammond-Kosack M.C.U."/>
            <person name="Hassani-Pak K."/>
            <person name="Hammond-Kosack K.E."/>
        </authorList>
    </citation>
    <scope>NUCLEOTIDE SEQUENCE [LARGE SCALE GENOMIC DNA]</scope>
    <source>
        <strain>ATCC MYA-4620 / CBS 123657 / FGSC 9075 / NRRL 31084 / PH-1</strain>
    </source>
</reference>
<keyword id="KW-0131">Cell cycle</keyword>
<keyword id="KW-0132">Cell division</keyword>
<keyword id="KW-0175">Coiled coil</keyword>
<keyword id="KW-0963">Cytoplasm</keyword>
<keyword id="KW-0206">Cytoskeleton</keyword>
<keyword id="KW-0493">Microtubule</keyword>
<keyword id="KW-0498">Mitosis</keyword>
<keyword id="KW-1185">Reference proteome</keyword>
<keyword id="KW-0677">Repeat</keyword>
<keyword id="KW-0813">Transport</keyword>
<keyword id="KW-0853">WD repeat</keyword>
<name>LIS1_GIBZE</name>
<dbReference type="EMBL" id="DS231665">
    <property type="protein sequence ID" value="ESU10945.1"/>
    <property type="molecule type" value="Genomic_DNA"/>
</dbReference>
<dbReference type="EMBL" id="HG970334">
    <property type="protein sequence ID" value="CEF86004.1"/>
    <property type="molecule type" value="Genomic_DNA"/>
</dbReference>
<dbReference type="RefSeq" id="XP_011323521.1">
    <property type="nucleotide sequence ID" value="XM_011325219.1"/>
</dbReference>
<dbReference type="SMR" id="Q4ICM0"/>
<dbReference type="FunCoup" id="Q4ICM0">
    <property type="interactions" value="48"/>
</dbReference>
<dbReference type="STRING" id="229533.Q4ICM0"/>
<dbReference type="GeneID" id="23552234"/>
<dbReference type="KEGG" id="fgr:FGSG_05038"/>
<dbReference type="VEuPathDB" id="FungiDB:FGRAMPH1_01G16941"/>
<dbReference type="eggNOG" id="KOG0295">
    <property type="taxonomic scope" value="Eukaryota"/>
</dbReference>
<dbReference type="HOGENOM" id="CLU_000288_57_15_1"/>
<dbReference type="InParanoid" id="Q4ICM0"/>
<dbReference type="OrthoDB" id="5133at110618"/>
<dbReference type="Proteomes" id="UP000070720">
    <property type="component" value="Chromosome 3"/>
</dbReference>
<dbReference type="GO" id="GO:0005737">
    <property type="term" value="C:cytoplasm"/>
    <property type="evidence" value="ECO:0007669"/>
    <property type="project" value="UniProtKB-UniRule"/>
</dbReference>
<dbReference type="GO" id="GO:0005874">
    <property type="term" value="C:microtubule"/>
    <property type="evidence" value="ECO:0007669"/>
    <property type="project" value="UniProtKB-KW"/>
</dbReference>
<dbReference type="GO" id="GO:0005875">
    <property type="term" value="C:microtubule associated complex"/>
    <property type="evidence" value="ECO:0007669"/>
    <property type="project" value="UniProtKB-UniRule"/>
</dbReference>
<dbReference type="GO" id="GO:0000922">
    <property type="term" value="C:spindle pole"/>
    <property type="evidence" value="ECO:0007669"/>
    <property type="project" value="UniProtKB-SubCell"/>
</dbReference>
<dbReference type="GO" id="GO:0070840">
    <property type="term" value="F:dynein complex binding"/>
    <property type="evidence" value="ECO:0007669"/>
    <property type="project" value="UniProtKB-UniRule"/>
</dbReference>
<dbReference type="GO" id="GO:0051301">
    <property type="term" value="P:cell division"/>
    <property type="evidence" value="ECO:0007669"/>
    <property type="project" value="UniProtKB-KW"/>
</dbReference>
<dbReference type="GO" id="GO:0000132">
    <property type="term" value="P:establishment of mitotic spindle orientation"/>
    <property type="evidence" value="ECO:0007669"/>
    <property type="project" value="UniProtKB-UniRule"/>
</dbReference>
<dbReference type="GO" id="GO:0051012">
    <property type="term" value="P:microtubule sliding"/>
    <property type="evidence" value="ECO:0007669"/>
    <property type="project" value="UniProtKB-UniRule"/>
</dbReference>
<dbReference type="CDD" id="cd00200">
    <property type="entry name" value="WD40"/>
    <property type="match status" value="1"/>
</dbReference>
<dbReference type="FunFam" id="2.130.10.10:FF:000342">
    <property type="entry name" value="Nuclear distribution protein PAC1"/>
    <property type="match status" value="1"/>
</dbReference>
<dbReference type="FunFam" id="1.20.960.30:FF:000002">
    <property type="entry name" value="Platelet-activating factor acetylhydrolase ib"/>
    <property type="match status" value="1"/>
</dbReference>
<dbReference type="Gene3D" id="1.20.960.30">
    <property type="match status" value="1"/>
</dbReference>
<dbReference type="Gene3D" id="2.130.10.10">
    <property type="entry name" value="YVTN repeat-like/Quinoprotein amine dehydrogenase"/>
    <property type="match status" value="1"/>
</dbReference>
<dbReference type="HAMAP" id="MF_03141">
    <property type="entry name" value="lis1"/>
    <property type="match status" value="1"/>
</dbReference>
<dbReference type="InterPro" id="IPR017252">
    <property type="entry name" value="Dynein_regulator_LIS1"/>
</dbReference>
<dbReference type="InterPro" id="IPR020472">
    <property type="entry name" value="G-protein_beta_WD-40_rep"/>
</dbReference>
<dbReference type="InterPro" id="IPR037190">
    <property type="entry name" value="LIS1_N"/>
</dbReference>
<dbReference type="InterPro" id="IPR056795">
    <property type="entry name" value="PAC1-like_LisH-like_dom"/>
</dbReference>
<dbReference type="InterPro" id="IPR015943">
    <property type="entry name" value="WD40/YVTN_repeat-like_dom_sf"/>
</dbReference>
<dbReference type="InterPro" id="IPR019775">
    <property type="entry name" value="WD40_repeat_CS"/>
</dbReference>
<dbReference type="InterPro" id="IPR036322">
    <property type="entry name" value="WD40_repeat_dom_sf"/>
</dbReference>
<dbReference type="InterPro" id="IPR001680">
    <property type="entry name" value="WD40_rpt"/>
</dbReference>
<dbReference type="InterPro" id="IPR050349">
    <property type="entry name" value="WD_LIS1/nudF_dynein_reg"/>
</dbReference>
<dbReference type="PANTHER" id="PTHR44129">
    <property type="entry name" value="WD REPEAT-CONTAINING PROTEIN POP1"/>
    <property type="match status" value="1"/>
</dbReference>
<dbReference type="Pfam" id="PF24951">
    <property type="entry name" value="LisH_PAC1"/>
    <property type="match status" value="1"/>
</dbReference>
<dbReference type="Pfam" id="PF00400">
    <property type="entry name" value="WD40"/>
    <property type="match status" value="6"/>
</dbReference>
<dbReference type="PIRSF" id="PIRSF037647">
    <property type="entry name" value="Dynein_regulator_Lis1"/>
    <property type="match status" value="1"/>
</dbReference>
<dbReference type="PRINTS" id="PR00320">
    <property type="entry name" value="GPROTEINBRPT"/>
</dbReference>
<dbReference type="SMART" id="SM00320">
    <property type="entry name" value="WD40"/>
    <property type="match status" value="7"/>
</dbReference>
<dbReference type="SUPFAM" id="SSF109925">
    <property type="entry name" value="Lissencephaly-1 protein (Lis-1, PAF-AH alpha) N-terminal domain"/>
    <property type="match status" value="1"/>
</dbReference>
<dbReference type="SUPFAM" id="SSF50978">
    <property type="entry name" value="WD40 repeat-like"/>
    <property type="match status" value="1"/>
</dbReference>
<dbReference type="PROSITE" id="PS00678">
    <property type="entry name" value="WD_REPEATS_1"/>
    <property type="match status" value="3"/>
</dbReference>
<dbReference type="PROSITE" id="PS50082">
    <property type="entry name" value="WD_REPEATS_2"/>
    <property type="match status" value="6"/>
</dbReference>
<dbReference type="PROSITE" id="PS50294">
    <property type="entry name" value="WD_REPEATS_REGION"/>
    <property type="match status" value="1"/>
</dbReference>
<feature type="chain" id="PRO_0000240426" description="Nuclear distribution protein PAC1">
    <location>
        <begin position="1"/>
        <end position="460"/>
    </location>
</feature>
<feature type="domain" description="LisH" evidence="1">
    <location>
        <begin position="9"/>
        <end position="41"/>
    </location>
</feature>
<feature type="repeat" description="WD 1">
    <location>
        <begin position="112"/>
        <end position="153"/>
    </location>
</feature>
<feature type="repeat" description="WD 2">
    <location>
        <begin position="155"/>
        <end position="195"/>
    </location>
</feature>
<feature type="repeat" description="WD 3">
    <location>
        <begin position="199"/>
        <end position="246"/>
    </location>
</feature>
<feature type="repeat" description="WD 4">
    <location>
        <begin position="249"/>
        <end position="288"/>
    </location>
</feature>
<feature type="repeat" description="WD 5">
    <location>
        <begin position="293"/>
        <end position="354"/>
    </location>
</feature>
<feature type="repeat" description="WD 6">
    <location>
        <begin position="355"/>
        <end position="394"/>
    </location>
</feature>
<feature type="repeat" description="WD 7">
    <location>
        <begin position="399"/>
        <end position="456"/>
    </location>
</feature>
<feature type="region of interest" description="Disordered" evidence="2">
    <location>
        <begin position="82"/>
        <end position="105"/>
    </location>
</feature>
<feature type="region of interest" description="Disordered" evidence="2">
    <location>
        <begin position="414"/>
        <end position="433"/>
    </location>
</feature>
<feature type="coiled-coil region" evidence="1">
    <location>
        <begin position="61"/>
        <end position="88"/>
    </location>
</feature>
<feature type="compositionally biased region" description="Polar residues" evidence="2">
    <location>
        <begin position="82"/>
        <end position="92"/>
    </location>
</feature>
<accession>Q4ICM0</accession>
<accession>A0A0E0SHU1</accession>
<accession>I1RM57</accession>
<accession>V6RGA2</accession>
<sequence length="460" mass="50451">MSRTLTSRQAEELHKSIIAYLAANNLQDSANAMRTELGLGEDAFDTATAKKYETLLEKKWTSVVRLQKKIMDLEAQTQTLQTELNSATPTSNRRGDPSSWLPAGPPRHVLQSHRTPINCVAFHPIFSSIASGDEDATIKIWDWEFGELERTVKGHTKAVLDLDYGGPKGHTLLASCSSDLTIKLWDPANEYQNIRTLPGHDHSVSAVRFIPSGAPGAPLSGNLLASASRDVTVRIWDVTTGYCVKTIRGHADWIRDVSPSLDGKYLLSTGNDRTVRLWDISVPNPEAKLVMIGHEHFVECCTFAPPAAYSHLATLAGVKKPPPASSTAEFMATGGRDKTIRLWDGRGNCIKTLIGHDNWVRGLVFHPSGKFLLSVSDDKTIRCWDLSQEGKCVKTVEGSHEHFITSLRWAPPIIKDKGPGEETNGDVGTPKKAATAPQDVQIRCVIATGSVDMSLRIFSR</sequence>
<comment type="function">
    <text evidence="1">Positively regulates the activity of the minus-end directed microtubule motor protein dynein. May enhance dynein-mediated microtubule sliding by targeting dynein to the microtubule plus end. Required for nuclear migration during vegetative growth as well as development. Required for retrograde early endosome (EE) transport from the hyphal tip. Required for localization of dynein to the mitotic spindle poles. Recruits additional proteins to the dynein complex at SPBs.</text>
</comment>
<comment type="subunit">
    <text evidence="1">Self-associates. Interacts with NDL1 and dynein.</text>
</comment>
<comment type="subcellular location">
    <subcellularLocation>
        <location>Cytoplasm</location>
        <location>Cytoskeleton</location>
    </subcellularLocation>
    <subcellularLocation>
        <location evidence="1">Cytoplasm</location>
        <location evidence="1">Cytoskeleton</location>
        <location evidence="1">Spindle pole</location>
    </subcellularLocation>
    <text evidence="1">Localizes to the plus ends of microtubules at the hyphal tip and the mitotic spindle poles.</text>
</comment>
<comment type="domain">
    <text evidence="1">Dimerization mediated by the LisH domain may be required to activate dynein.</text>
</comment>
<comment type="similarity">
    <text evidence="1">Belongs to the WD repeat LIS1/nudF family.</text>
</comment>
<evidence type="ECO:0000255" key="1">
    <source>
        <dbReference type="HAMAP-Rule" id="MF_03141"/>
    </source>
</evidence>
<evidence type="ECO:0000256" key="2">
    <source>
        <dbReference type="SAM" id="MobiDB-lite"/>
    </source>
</evidence>
<organism>
    <name type="scientific">Gibberella zeae (strain ATCC MYA-4620 / CBS 123657 / FGSC 9075 / NRRL 31084 / PH-1)</name>
    <name type="common">Wheat head blight fungus</name>
    <name type="synonym">Fusarium graminearum</name>
    <dbReference type="NCBI Taxonomy" id="229533"/>
    <lineage>
        <taxon>Eukaryota</taxon>
        <taxon>Fungi</taxon>
        <taxon>Dikarya</taxon>
        <taxon>Ascomycota</taxon>
        <taxon>Pezizomycotina</taxon>
        <taxon>Sordariomycetes</taxon>
        <taxon>Hypocreomycetidae</taxon>
        <taxon>Hypocreales</taxon>
        <taxon>Nectriaceae</taxon>
        <taxon>Fusarium</taxon>
    </lineage>
</organism>